<proteinExistence type="inferred from homology"/>
<comment type="function">
    <text evidence="2">Component of an amino-acid transport system.</text>
</comment>
<comment type="similarity">
    <text evidence="2">Belongs to the leucine-binding protein family.</text>
</comment>
<dbReference type="EMBL" id="AE017224">
    <property type="protein sequence ID" value="AAX76500.1"/>
    <property type="molecule type" value="Genomic_DNA"/>
</dbReference>
<dbReference type="RefSeq" id="WP_002966589.1">
    <property type="nucleotide sequence ID" value="NC_006933.1"/>
</dbReference>
<dbReference type="SMR" id="Q576D4"/>
<dbReference type="EnsemblBacteria" id="AAX76500">
    <property type="protein sequence ID" value="AAX76500"/>
    <property type="gene ID" value="BruAb2_1129"/>
</dbReference>
<dbReference type="KEGG" id="bmb:BruAb2_1129"/>
<dbReference type="HOGENOM" id="CLU_027128_4_1_5"/>
<dbReference type="Proteomes" id="UP000000540">
    <property type="component" value="Chromosome II"/>
</dbReference>
<dbReference type="GO" id="GO:0006865">
    <property type="term" value="P:amino acid transport"/>
    <property type="evidence" value="ECO:0007669"/>
    <property type="project" value="UniProtKB-KW"/>
</dbReference>
<dbReference type="CDD" id="cd06338">
    <property type="entry name" value="PBP1_ABC_ligand_binding-like"/>
    <property type="match status" value="1"/>
</dbReference>
<dbReference type="Gene3D" id="3.40.50.2300">
    <property type="match status" value="2"/>
</dbReference>
<dbReference type="InterPro" id="IPR051010">
    <property type="entry name" value="BCAA_transport"/>
</dbReference>
<dbReference type="InterPro" id="IPR028081">
    <property type="entry name" value="Leu-bd"/>
</dbReference>
<dbReference type="InterPro" id="IPR028082">
    <property type="entry name" value="Peripla_BP_I"/>
</dbReference>
<dbReference type="PANTHER" id="PTHR30483:SF37">
    <property type="entry name" value="ABC TRANSPORTER SUBSTRATE-BINDING PROTEIN"/>
    <property type="match status" value="1"/>
</dbReference>
<dbReference type="PANTHER" id="PTHR30483">
    <property type="entry name" value="LEUCINE-SPECIFIC-BINDING PROTEIN"/>
    <property type="match status" value="1"/>
</dbReference>
<dbReference type="Pfam" id="PF13458">
    <property type="entry name" value="Peripla_BP_6"/>
    <property type="match status" value="1"/>
</dbReference>
<dbReference type="SUPFAM" id="SSF53822">
    <property type="entry name" value="Periplasmic binding protein-like I"/>
    <property type="match status" value="1"/>
</dbReference>
<keyword id="KW-0029">Amino-acid transport</keyword>
<keyword id="KW-0732">Signal</keyword>
<keyword id="KW-0813">Transport</keyword>
<name>LIVB5_BRUAB</name>
<evidence type="ECO:0000255" key="1"/>
<evidence type="ECO:0000305" key="2"/>
<feature type="signal peptide" evidence="1">
    <location>
        <begin position="1"/>
        <end position="29"/>
    </location>
</feature>
<feature type="chain" id="PRO_0000282526" description="Leu/Ile/Val-binding protein homolog 5">
    <location>
        <begin position="30"/>
        <end position="406"/>
    </location>
</feature>
<reference key="1">
    <citation type="journal article" date="2005" name="J. Bacteriol.">
        <title>Completion of the genome sequence of Brucella abortus and comparison to the highly similar genomes of Brucella melitensis and Brucella suis.</title>
        <authorList>
            <person name="Halling S.M."/>
            <person name="Peterson-Burch B.D."/>
            <person name="Bricker B.J."/>
            <person name="Zuerner R.L."/>
            <person name="Qing Z."/>
            <person name="Li L.-L."/>
            <person name="Kapur V."/>
            <person name="Alt D.P."/>
            <person name="Olsen S.C."/>
        </authorList>
    </citation>
    <scope>NUCLEOTIDE SEQUENCE [LARGE SCALE GENOMIC DNA]</scope>
    <source>
        <strain>9-941</strain>
    </source>
</reference>
<gene>
    <name type="ordered locus">BruAb2_1129</name>
</gene>
<protein>
    <recommendedName>
        <fullName>Leu/Ile/Val-binding protein homolog 5</fullName>
    </recommendedName>
</protein>
<sequence>MIGTRLPAWTRVLACGVAGLSLMTISAKAEDVITLGASVQLSGPVANTGRYYQDAYNITIDKINAAGGVKVDGKPYKLALKIYDNQSNVNLSVRQYTQLVTTDKVNFLLGPFASNFALADSVISEKYRIPMVQGGGASDEIYSRNFKYIFGTLAPASNYFGSTVEMLKGLDPKVTNVALVYADDSFDVSVADGTRKLLKDAGFTIAADEKFATNSTDFTSLISQIKSKNVDAVLVAGHETEVLNFVRQSKSLAFDPKLYSFTVGVPTEDFRKALGKDANYAFGMTAWLPSADLKDRWFGDAAKFETEYKARFNYEPDYHAASGASDVEAFAEAIEKANSLDPQKVRDALASIKFDSLYGPIAFDKQGQINLPQIVVQVQDGKLVEIRGPAGQVNPPQYPMPAWNAR</sequence>
<accession>Q576D4</accession>
<organism>
    <name type="scientific">Brucella abortus biovar 1 (strain 9-941)</name>
    <dbReference type="NCBI Taxonomy" id="262698"/>
    <lineage>
        <taxon>Bacteria</taxon>
        <taxon>Pseudomonadati</taxon>
        <taxon>Pseudomonadota</taxon>
        <taxon>Alphaproteobacteria</taxon>
        <taxon>Hyphomicrobiales</taxon>
        <taxon>Brucellaceae</taxon>
        <taxon>Brucella/Ochrobactrum group</taxon>
        <taxon>Brucella</taxon>
    </lineage>
</organism>